<name>NNRE_LIMF3</name>
<organism>
    <name type="scientific">Limosilactobacillus fermentum (strain NBRC 3956 / LMG 18251)</name>
    <name type="common">Lactobacillus fermentum</name>
    <dbReference type="NCBI Taxonomy" id="334390"/>
    <lineage>
        <taxon>Bacteria</taxon>
        <taxon>Bacillati</taxon>
        <taxon>Bacillota</taxon>
        <taxon>Bacilli</taxon>
        <taxon>Lactobacillales</taxon>
        <taxon>Lactobacillaceae</taxon>
        <taxon>Limosilactobacillus</taxon>
    </lineage>
</organism>
<gene>
    <name evidence="1" type="primary">nnrE</name>
    <name type="ordered locus">LAF_1815</name>
</gene>
<proteinExistence type="inferred from homology"/>
<protein>
    <recommendedName>
        <fullName evidence="1">NAD(P)H-hydrate epimerase</fullName>
        <ecNumber evidence="1">5.1.99.6</ecNumber>
    </recommendedName>
    <alternativeName>
        <fullName evidence="1">NAD(P)HX epimerase</fullName>
    </alternativeName>
</protein>
<evidence type="ECO:0000255" key="1">
    <source>
        <dbReference type="HAMAP-Rule" id="MF_01966"/>
    </source>
</evidence>
<reference key="1">
    <citation type="journal article" date="2008" name="DNA Res.">
        <title>Comparative genome analysis of Lactobacillus reuteri and Lactobacillus fermentum reveal a genomic island for reuterin and cobalamin production.</title>
        <authorList>
            <person name="Morita H."/>
            <person name="Toh H."/>
            <person name="Fukuda S."/>
            <person name="Horikawa H."/>
            <person name="Oshima K."/>
            <person name="Suzuki T."/>
            <person name="Murakami M."/>
            <person name="Hisamatsu S."/>
            <person name="Kato Y."/>
            <person name="Takizawa T."/>
            <person name="Fukuoka H."/>
            <person name="Yoshimura T."/>
            <person name="Itoh K."/>
            <person name="O'Sullivan D.J."/>
            <person name="McKay L.L."/>
            <person name="Ohno H."/>
            <person name="Kikuchi J."/>
            <person name="Masaoka T."/>
            <person name="Hattori M."/>
        </authorList>
    </citation>
    <scope>NUCLEOTIDE SEQUENCE [LARGE SCALE GENOMIC DNA]</scope>
    <source>
        <strain>NBRC 3956 / LMG 18251</strain>
    </source>
</reference>
<keyword id="KW-0413">Isomerase</keyword>
<keyword id="KW-0479">Metal-binding</keyword>
<keyword id="KW-0520">NAD</keyword>
<keyword id="KW-0521">NADP</keyword>
<keyword id="KW-0547">Nucleotide-binding</keyword>
<keyword id="KW-0630">Potassium</keyword>
<keyword id="KW-1185">Reference proteome</keyword>
<feature type="chain" id="PRO_0000416357" description="NAD(P)H-hydrate epimerase">
    <location>
        <begin position="1"/>
        <end position="208"/>
    </location>
</feature>
<feature type="domain" description="YjeF N-terminal" evidence="1">
    <location>
        <begin position="11"/>
        <end position="208"/>
    </location>
</feature>
<feature type="binding site" evidence="1">
    <location>
        <begin position="59"/>
        <end position="63"/>
    </location>
    <ligand>
        <name>(6S)-NADPHX</name>
        <dbReference type="ChEBI" id="CHEBI:64076"/>
    </ligand>
</feature>
<feature type="binding site" evidence="1">
    <location>
        <position position="60"/>
    </location>
    <ligand>
        <name>K(+)</name>
        <dbReference type="ChEBI" id="CHEBI:29103"/>
    </ligand>
</feature>
<feature type="binding site" evidence="1">
    <location>
        <position position="122"/>
    </location>
    <ligand>
        <name>K(+)</name>
        <dbReference type="ChEBI" id="CHEBI:29103"/>
    </ligand>
</feature>
<feature type="binding site" evidence="1">
    <location>
        <begin position="126"/>
        <end position="132"/>
    </location>
    <ligand>
        <name>(6S)-NADPHX</name>
        <dbReference type="ChEBI" id="CHEBI:64076"/>
    </ligand>
</feature>
<feature type="binding site" evidence="1">
    <location>
        <position position="137"/>
    </location>
    <ligand>
        <name>(6S)-NADPHX</name>
        <dbReference type="ChEBI" id="CHEBI:64076"/>
    </ligand>
</feature>
<feature type="binding site" evidence="1">
    <location>
        <position position="155"/>
    </location>
    <ligand>
        <name>(6S)-NADPHX</name>
        <dbReference type="ChEBI" id="CHEBI:64076"/>
    </ligand>
</feature>
<feature type="binding site" evidence="1">
    <location>
        <position position="158"/>
    </location>
    <ligand>
        <name>K(+)</name>
        <dbReference type="ChEBI" id="CHEBI:29103"/>
    </ligand>
</feature>
<dbReference type="EC" id="5.1.99.6" evidence="1"/>
<dbReference type="EMBL" id="AP008937">
    <property type="protein sequence ID" value="BAG28151.1"/>
    <property type="molecule type" value="Genomic_DNA"/>
</dbReference>
<dbReference type="RefSeq" id="WP_012391798.1">
    <property type="nucleotide sequence ID" value="NC_010610.1"/>
</dbReference>
<dbReference type="SMR" id="B2GER9"/>
<dbReference type="KEGG" id="lfe:LAF_1815"/>
<dbReference type="PATRIC" id="fig|334390.5.peg.1997"/>
<dbReference type="eggNOG" id="COG0062">
    <property type="taxonomic scope" value="Bacteria"/>
</dbReference>
<dbReference type="HOGENOM" id="CLU_024853_0_1_9"/>
<dbReference type="Proteomes" id="UP000001697">
    <property type="component" value="Chromosome"/>
</dbReference>
<dbReference type="GO" id="GO:0046872">
    <property type="term" value="F:metal ion binding"/>
    <property type="evidence" value="ECO:0007669"/>
    <property type="project" value="UniProtKB-KW"/>
</dbReference>
<dbReference type="GO" id="GO:0052856">
    <property type="term" value="F:NAD(P)HX epimerase activity"/>
    <property type="evidence" value="ECO:0007669"/>
    <property type="project" value="UniProtKB-UniRule"/>
</dbReference>
<dbReference type="GO" id="GO:0000166">
    <property type="term" value="F:nucleotide binding"/>
    <property type="evidence" value="ECO:0007669"/>
    <property type="project" value="UniProtKB-KW"/>
</dbReference>
<dbReference type="Gene3D" id="3.40.50.10260">
    <property type="entry name" value="YjeF N-terminal domain"/>
    <property type="match status" value="1"/>
</dbReference>
<dbReference type="HAMAP" id="MF_01966">
    <property type="entry name" value="NADHX_epimerase"/>
    <property type="match status" value="1"/>
</dbReference>
<dbReference type="InterPro" id="IPR004443">
    <property type="entry name" value="YjeF_N_dom"/>
</dbReference>
<dbReference type="InterPro" id="IPR036652">
    <property type="entry name" value="YjeF_N_dom_sf"/>
</dbReference>
<dbReference type="InterPro" id="IPR032976">
    <property type="entry name" value="YJEFN_prot_NAXE-like"/>
</dbReference>
<dbReference type="NCBIfam" id="TIGR00197">
    <property type="entry name" value="yjeF_nterm"/>
    <property type="match status" value="1"/>
</dbReference>
<dbReference type="PANTHER" id="PTHR13232">
    <property type="entry name" value="NAD(P)H-HYDRATE EPIMERASE"/>
    <property type="match status" value="1"/>
</dbReference>
<dbReference type="PANTHER" id="PTHR13232:SF10">
    <property type="entry name" value="NAD(P)H-HYDRATE EPIMERASE"/>
    <property type="match status" value="1"/>
</dbReference>
<dbReference type="Pfam" id="PF03853">
    <property type="entry name" value="YjeF_N"/>
    <property type="match status" value="1"/>
</dbReference>
<dbReference type="SUPFAM" id="SSF64153">
    <property type="entry name" value="YjeF N-terminal domain-like"/>
    <property type="match status" value="1"/>
</dbReference>
<dbReference type="PROSITE" id="PS51385">
    <property type="entry name" value="YJEF_N"/>
    <property type="match status" value="1"/>
</dbReference>
<sequence length="208" mass="21635">MTEQAITAAQMRAKDQFTINQIGIPSLVLMERASLAVRDAILTHYPAANKIVVVAGQGNNGGDGLAIARLLHVAGRGVAILTIGNSAHASSEHQTQAHICDYYQIPVASDPALLKDADLIIDAIFGIGIDRPVEGAYATVIKQVNAAHAPVVAVDVPSGINTDTGAVMGVAVKADLTVTFSYNKTGLVTDQGQAYAGRVIVADDMGTY</sequence>
<comment type="function">
    <text evidence="1">Catalyzes the epimerization of the S- and R-forms of NAD(P)HX, a damaged form of NAD(P)H that is a result of enzymatic or heat-dependent hydration. This is a prerequisite for the S-specific NAD(P)H-hydrate dehydratase to allow the repair of both epimers of NAD(P)HX.</text>
</comment>
<comment type="catalytic activity">
    <reaction evidence="1">
        <text>(6R)-NADHX = (6S)-NADHX</text>
        <dbReference type="Rhea" id="RHEA:32215"/>
        <dbReference type="ChEBI" id="CHEBI:64074"/>
        <dbReference type="ChEBI" id="CHEBI:64075"/>
        <dbReference type="EC" id="5.1.99.6"/>
    </reaction>
</comment>
<comment type="catalytic activity">
    <reaction evidence="1">
        <text>(6R)-NADPHX = (6S)-NADPHX</text>
        <dbReference type="Rhea" id="RHEA:32227"/>
        <dbReference type="ChEBI" id="CHEBI:64076"/>
        <dbReference type="ChEBI" id="CHEBI:64077"/>
        <dbReference type="EC" id="5.1.99.6"/>
    </reaction>
</comment>
<comment type="cofactor">
    <cofactor evidence="1">
        <name>K(+)</name>
        <dbReference type="ChEBI" id="CHEBI:29103"/>
    </cofactor>
    <text evidence="1">Binds 1 potassium ion per subunit.</text>
</comment>
<comment type="similarity">
    <text evidence="1">Belongs to the NnrE/AIBP family.</text>
</comment>
<accession>B2GER9</accession>